<proteinExistence type="inferred from homology"/>
<organism>
    <name type="scientific">Yersinia pseudotuberculosis serotype I (strain IP32953)</name>
    <dbReference type="NCBI Taxonomy" id="273123"/>
    <lineage>
        <taxon>Bacteria</taxon>
        <taxon>Pseudomonadati</taxon>
        <taxon>Pseudomonadota</taxon>
        <taxon>Gammaproteobacteria</taxon>
        <taxon>Enterobacterales</taxon>
        <taxon>Yersiniaceae</taxon>
        <taxon>Yersinia</taxon>
    </lineage>
</organism>
<reference key="1">
    <citation type="journal article" date="2004" name="Proc. Natl. Acad. Sci. U.S.A.">
        <title>Insights into the evolution of Yersinia pestis through whole-genome comparison with Yersinia pseudotuberculosis.</title>
        <authorList>
            <person name="Chain P.S.G."/>
            <person name="Carniel E."/>
            <person name="Larimer F.W."/>
            <person name="Lamerdin J."/>
            <person name="Stoutland P.O."/>
            <person name="Regala W.M."/>
            <person name="Georgescu A.M."/>
            <person name="Vergez L.M."/>
            <person name="Land M.L."/>
            <person name="Motin V.L."/>
            <person name="Brubaker R.R."/>
            <person name="Fowler J."/>
            <person name="Hinnebusch J."/>
            <person name="Marceau M."/>
            <person name="Medigue C."/>
            <person name="Simonet M."/>
            <person name="Chenal-Francisque V."/>
            <person name="Souza B."/>
            <person name="Dacheux D."/>
            <person name="Elliott J.M."/>
            <person name="Derbise A."/>
            <person name="Hauser L.J."/>
            <person name="Garcia E."/>
        </authorList>
    </citation>
    <scope>NUCLEOTIDE SEQUENCE [LARGE SCALE GENOMIC DNA]</scope>
    <source>
        <strain>IP32953</strain>
    </source>
</reference>
<reference key="2">
    <citation type="journal article" date="1991" name="Biochim. Biophys. Acta">
        <title>The nucleotide and deduced amino acid sequence of the cationic 19 kDa outer membrane protein OmpH of Yersinia pseudotuberculosis.</title>
        <authorList>
            <person name="Vuorio R."/>
            <person name="Hirvas L."/>
            <person name="Raybourne R.B."/>
            <person name="Yu D.T.Y."/>
            <person name="Vaara M."/>
        </authorList>
    </citation>
    <scope>NUCLEOTIDE SEQUENCE [GENOMIC DNA] OF 30-158</scope>
    <source>
        <strain>78</strain>
    </source>
</reference>
<accession>P31520</accession>
<accession>Q667J8</accession>
<name>SKP_YERPS</name>
<evidence type="ECO:0000250" key="1"/>
<evidence type="ECO:0000255" key="2"/>
<evidence type="ECO:0000305" key="3"/>
<sequence length="165" mass="18279">MKKWLCAASLGLALAASASVQAADKIAIVNVSSIFQQLPAREAVAKQLENEFKGRATELQGMERDLQTKMQKLQRDGSTMKASDRTKLENEVMKQRETFSTKAQAFEQDNRRRQAEERNKILSRIQDAVKSVATKGGYDVVIDANAVAYADSSKDITADVLKQVK</sequence>
<gene>
    <name type="primary">skp</name>
    <name type="synonym">ompH</name>
    <name type="ordered locus">YPTB2994</name>
</gene>
<feature type="signal peptide" evidence="2">
    <location>
        <begin position="1"/>
        <end position="22"/>
    </location>
</feature>
<feature type="chain" id="PRO_0000020182" description="Chaperone protein Skp">
    <location>
        <begin position="23"/>
        <end position="165"/>
    </location>
</feature>
<feature type="region of interest" description="Lipopolysaccharide binding" evidence="2">
    <location>
        <begin position="102"/>
        <end position="113"/>
    </location>
</feature>
<keyword id="KW-0143">Chaperone</keyword>
<keyword id="KW-0574">Periplasm</keyword>
<keyword id="KW-0732">Signal</keyword>
<comment type="function">
    <text evidence="1">Molecular chaperone that interacts specifically with outer membrane proteins, thus maintaining the solubility of early folding intermediates during passage through the periplasm.</text>
</comment>
<comment type="subunit">
    <text evidence="1">Homotrimer.</text>
</comment>
<comment type="subcellular location">
    <subcellularLocation>
        <location evidence="1">Periplasm</location>
    </subcellularLocation>
</comment>
<comment type="similarity">
    <text evidence="3">Belongs to the Skp family.</text>
</comment>
<comment type="sequence caution" evidence="3">
    <conflict type="erroneous initiation">
        <sequence resource="EMBL-CDS" id="CAH22232"/>
    </conflict>
</comment>
<dbReference type="EMBL" id="BX936398">
    <property type="protein sequence ID" value="CAH22232.1"/>
    <property type="status" value="ALT_INIT"/>
    <property type="molecule type" value="Genomic_DNA"/>
</dbReference>
<dbReference type="EMBL" id="M73247">
    <property type="protein sequence ID" value="AAA27657.1"/>
    <property type="molecule type" value="Genomic_DNA"/>
</dbReference>
<dbReference type="PIR" id="S19728">
    <property type="entry name" value="S19728"/>
</dbReference>
<dbReference type="RefSeq" id="WP_002212140.1">
    <property type="nucleotide sequence ID" value="NZ_CP009712.1"/>
</dbReference>
<dbReference type="SMR" id="P31520"/>
<dbReference type="GeneID" id="96662361"/>
<dbReference type="KEGG" id="ypo:BZ17_3627"/>
<dbReference type="KEGG" id="yps:YPTB2994"/>
<dbReference type="PATRIC" id="fig|273123.14.peg.3808"/>
<dbReference type="Proteomes" id="UP000001011">
    <property type="component" value="Chromosome"/>
</dbReference>
<dbReference type="GO" id="GO:0005829">
    <property type="term" value="C:cytosol"/>
    <property type="evidence" value="ECO:0007669"/>
    <property type="project" value="TreeGrafter"/>
</dbReference>
<dbReference type="GO" id="GO:0042597">
    <property type="term" value="C:periplasmic space"/>
    <property type="evidence" value="ECO:0007669"/>
    <property type="project" value="UniProtKB-SubCell"/>
</dbReference>
<dbReference type="GO" id="GO:0051082">
    <property type="term" value="F:unfolded protein binding"/>
    <property type="evidence" value="ECO:0007669"/>
    <property type="project" value="InterPro"/>
</dbReference>
<dbReference type="GO" id="GO:0061077">
    <property type="term" value="P:chaperone-mediated protein folding"/>
    <property type="evidence" value="ECO:0007669"/>
    <property type="project" value="TreeGrafter"/>
</dbReference>
<dbReference type="GO" id="GO:0050821">
    <property type="term" value="P:protein stabilization"/>
    <property type="evidence" value="ECO:0007669"/>
    <property type="project" value="TreeGrafter"/>
</dbReference>
<dbReference type="FunFam" id="3.30.910.20:FF:000001">
    <property type="entry name" value="Molecular chaperone Skp"/>
    <property type="match status" value="1"/>
</dbReference>
<dbReference type="Gene3D" id="3.30.910.20">
    <property type="entry name" value="Skp domain"/>
    <property type="match status" value="1"/>
</dbReference>
<dbReference type="InterPro" id="IPR005632">
    <property type="entry name" value="Chaperone_Skp"/>
</dbReference>
<dbReference type="InterPro" id="IPR024930">
    <property type="entry name" value="Skp_dom_sf"/>
</dbReference>
<dbReference type="NCBIfam" id="NF008047">
    <property type="entry name" value="PRK10780.1"/>
    <property type="match status" value="1"/>
</dbReference>
<dbReference type="PANTHER" id="PTHR35089">
    <property type="entry name" value="CHAPERONE PROTEIN SKP"/>
    <property type="match status" value="1"/>
</dbReference>
<dbReference type="PANTHER" id="PTHR35089:SF1">
    <property type="entry name" value="CHAPERONE PROTEIN SKP"/>
    <property type="match status" value="1"/>
</dbReference>
<dbReference type="Pfam" id="PF03938">
    <property type="entry name" value="OmpH"/>
    <property type="match status" value="1"/>
</dbReference>
<dbReference type="PIRSF" id="PIRSF002094">
    <property type="entry name" value="OMP26_Skp"/>
    <property type="match status" value="1"/>
</dbReference>
<dbReference type="SMART" id="SM00935">
    <property type="entry name" value="OmpH"/>
    <property type="match status" value="1"/>
</dbReference>
<dbReference type="SUPFAM" id="SSF111384">
    <property type="entry name" value="OmpH-like"/>
    <property type="match status" value="1"/>
</dbReference>
<protein>
    <recommendedName>
        <fullName>Chaperone protein Skp</fullName>
    </recommendedName>
    <alternativeName>
        <fullName>Cationic 19 kDa outer membrane protein</fullName>
    </alternativeName>
</protein>